<reference key="1">
    <citation type="journal article" date="2005" name="Nat. Biotechnol.">
        <title>Complete genome sequence of the plant commensal Pseudomonas fluorescens Pf-5.</title>
        <authorList>
            <person name="Paulsen I.T."/>
            <person name="Press C.M."/>
            <person name="Ravel J."/>
            <person name="Kobayashi D.Y."/>
            <person name="Myers G.S.A."/>
            <person name="Mavrodi D.V."/>
            <person name="DeBoy R.T."/>
            <person name="Seshadri R."/>
            <person name="Ren Q."/>
            <person name="Madupu R."/>
            <person name="Dodson R.J."/>
            <person name="Durkin A.S."/>
            <person name="Brinkac L.M."/>
            <person name="Daugherty S.C."/>
            <person name="Sullivan S.A."/>
            <person name="Rosovitz M.J."/>
            <person name="Gwinn M.L."/>
            <person name="Zhou L."/>
            <person name="Schneider D.J."/>
            <person name="Cartinhour S.W."/>
            <person name="Nelson W.C."/>
            <person name="Weidman J."/>
            <person name="Watkins K."/>
            <person name="Tran K."/>
            <person name="Khouri H."/>
            <person name="Pierson E.A."/>
            <person name="Pierson L.S. III"/>
            <person name="Thomashow L.S."/>
            <person name="Loper J.E."/>
        </authorList>
    </citation>
    <scope>NUCLEOTIDE SEQUENCE [LARGE SCALE GENOMIC DNA]</scope>
    <source>
        <strain>ATCC BAA-477 / NRRL B-23932 / Pf-5</strain>
    </source>
</reference>
<evidence type="ECO:0000255" key="1">
    <source>
        <dbReference type="HAMAP-Rule" id="MF_01671"/>
    </source>
</evidence>
<proteinExistence type="inferred from homology"/>
<protein>
    <recommendedName>
        <fullName evidence="1">Inositol 2-dehydrogenase</fullName>
        <ecNumber evidence="1">1.1.1.18</ecNumber>
    </recommendedName>
    <alternativeName>
        <fullName evidence="1">Myo-inositol 2-dehydrogenase</fullName>
        <shortName evidence="1">MI 2-dehydrogenase</shortName>
    </alternativeName>
</protein>
<accession>Q4KDI5</accession>
<gene>
    <name evidence="1" type="primary">iolG</name>
    <name type="ordered locus">PFL_2591</name>
</gene>
<dbReference type="EC" id="1.1.1.18" evidence="1"/>
<dbReference type="EMBL" id="CP000076">
    <property type="protein sequence ID" value="AAY91864.1"/>
    <property type="molecule type" value="Genomic_DNA"/>
</dbReference>
<dbReference type="RefSeq" id="WP_011060887.1">
    <property type="nucleotide sequence ID" value="NC_004129.6"/>
</dbReference>
<dbReference type="SMR" id="Q4KDI5"/>
<dbReference type="STRING" id="220664.PFL_2591"/>
<dbReference type="KEGG" id="pfl:PFL_2591"/>
<dbReference type="PATRIC" id="fig|220664.5.peg.2637"/>
<dbReference type="eggNOG" id="COG0673">
    <property type="taxonomic scope" value="Bacteria"/>
</dbReference>
<dbReference type="HOGENOM" id="CLU_023194_0_1_6"/>
<dbReference type="Proteomes" id="UP000008540">
    <property type="component" value="Chromosome"/>
</dbReference>
<dbReference type="GO" id="GO:0050112">
    <property type="term" value="F:inositol 2-dehydrogenase (NAD+) activity"/>
    <property type="evidence" value="ECO:0007669"/>
    <property type="project" value="UniProtKB-UniRule"/>
</dbReference>
<dbReference type="GO" id="GO:0000166">
    <property type="term" value="F:nucleotide binding"/>
    <property type="evidence" value="ECO:0007669"/>
    <property type="project" value="InterPro"/>
</dbReference>
<dbReference type="GO" id="GO:0019310">
    <property type="term" value="P:inositol catabolic process"/>
    <property type="evidence" value="ECO:0007669"/>
    <property type="project" value="UniProtKB-UniRule"/>
</dbReference>
<dbReference type="Gene3D" id="3.30.360.10">
    <property type="entry name" value="Dihydrodipicolinate Reductase, domain 2"/>
    <property type="match status" value="1"/>
</dbReference>
<dbReference type="Gene3D" id="3.40.50.720">
    <property type="entry name" value="NAD(P)-binding Rossmann-like Domain"/>
    <property type="match status" value="1"/>
</dbReference>
<dbReference type="HAMAP" id="MF_01671">
    <property type="entry name" value="IolG"/>
    <property type="match status" value="1"/>
</dbReference>
<dbReference type="InterPro" id="IPR050424">
    <property type="entry name" value="Gfo-Idh-MocA_inositol_DH"/>
</dbReference>
<dbReference type="InterPro" id="IPR004104">
    <property type="entry name" value="Gfo/Idh/MocA-like_OxRdtase_C"/>
</dbReference>
<dbReference type="InterPro" id="IPR000683">
    <property type="entry name" value="Gfo/Idh/MocA-like_OxRdtase_N"/>
</dbReference>
<dbReference type="InterPro" id="IPR023794">
    <property type="entry name" value="MI/DCI_dehydrogenase"/>
</dbReference>
<dbReference type="InterPro" id="IPR036291">
    <property type="entry name" value="NAD(P)-bd_dom_sf"/>
</dbReference>
<dbReference type="PANTHER" id="PTHR43593">
    <property type="match status" value="1"/>
</dbReference>
<dbReference type="PANTHER" id="PTHR43593:SF1">
    <property type="entry name" value="INOSITOL 2-DEHYDROGENASE"/>
    <property type="match status" value="1"/>
</dbReference>
<dbReference type="Pfam" id="PF01408">
    <property type="entry name" value="GFO_IDH_MocA"/>
    <property type="match status" value="1"/>
</dbReference>
<dbReference type="Pfam" id="PF02894">
    <property type="entry name" value="GFO_IDH_MocA_C"/>
    <property type="match status" value="1"/>
</dbReference>
<dbReference type="SUPFAM" id="SSF55347">
    <property type="entry name" value="Glyceraldehyde-3-phosphate dehydrogenase-like, C-terminal domain"/>
    <property type="match status" value="1"/>
</dbReference>
<dbReference type="SUPFAM" id="SSF51735">
    <property type="entry name" value="NAD(P)-binding Rossmann-fold domains"/>
    <property type="match status" value="1"/>
</dbReference>
<organism>
    <name type="scientific">Pseudomonas fluorescens (strain ATCC BAA-477 / NRRL B-23932 / Pf-5)</name>
    <dbReference type="NCBI Taxonomy" id="220664"/>
    <lineage>
        <taxon>Bacteria</taxon>
        <taxon>Pseudomonadati</taxon>
        <taxon>Pseudomonadota</taxon>
        <taxon>Gammaproteobacteria</taxon>
        <taxon>Pseudomonadales</taxon>
        <taxon>Pseudomonadaceae</taxon>
        <taxon>Pseudomonas</taxon>
    </lineage>
</organism>
<comment type="function">
    <text evidence="1">Involved in the oxidation of myo-inositol (MI) to 2-keto-myo-inositol (2KMI or 2-inosose).</text>
</comment>
<comment type="catalytic activity">
    <reaction evidence="1">
        <text>myo-inositol + NAD(+) = scyllo-inosose + NADH + H(+)</text>
        <dbReference type="Rhea" id="RHEA:16949"/>
        <dbReference type="ChEBI" id="CHEBI:15378"/>
        <dbReference type="ChEBI" id="CHEBI:17268"/>
        <dbReference type="ChEBI" id="CHEBI:17811"/>
        <dbReference type="ChEBI" id="CHEBI:57540"/>
        <dbReference type="ChEBI" id="CHEBI:57945"/>
        <dbReference type="EC" id="1.1.1.18"/>
    </reaction>
</comment>
<comment type="subunit">
    <text evidence="1">Homotetramer.</text>
</comment>
<comment type="similarity">
    <text evidence="1">Belongs to the Gfo/Idh/MocA family.</text>
</comment>
<keyword id="KW-0520">NAD</keyword>
<keyword id="KW-0560">Oxidoreductase</keyword>
<sequence length="336" mass="36253">MSLQLGVIGTGAIGQDHIRRCSQTLQGCRVVAVTDIDPQQAARVLAGLTLEAEVYPDGHALIQAPEVQALLVTSWGPSHEEFVLAAIAAGKPVFCEKPLAVTAAGCRRIVEAEIAQGRRLVQVGFMRPYDAGYQALKAVVDSGRIGEPLMLHCAHRNPRVGENYKTDMAITDTLIHELDVLRWLLADDYVSVQVLFPRKTGKAHAQLRDPQIVLLETARGTRIDVEIFVNCQYGYDIQCEVVGESGIARLPEPPQVQLRSAASLSSAILMDWKERFIAAYDVELQAFVDGVRAGRVGGPSAWDGLAAAVAADACIEAQQSGAIVPISLPQRPALYA</sequence>
<feature type="chain" id="PRO_0000352580" description="Inositol 2-dehydrogenase">
    <location>
        <begin position="1"/>
        <end position="336"/>
    </location>
</feature>
<name>IOLG_PSEF5</name>